<dbReference type="EC" id="3.1.3.-" evidence="1"/>
<dbReference type="EMBL" id="AE016796">
    <property type="protein sequence ID" value="AAO08339.1"/>
    <property type="molecule type" value="Genomic_DNA"/>
</dbReference>
<dbReference type="RefSeq" id="WP_011082328.1">
    <property type="nucleotide sequence ID" value="NC_004460.2"/>
</dbReference>
<dbReference type="SMR" id="Q8D456"/>
<dbReference type="KEGG" id="vvu:VV2_1469"/>
<dbReference type="HOGENOM" id="CLU_061999_0_1_6"/>
<dbReference type="Proteomes" id="UP000002275">
    <property type="component" value="Chromosome 2"/>
</dbReference>
<dbReference type="GO" id="GO:0005829">
    <property type="term" value="C:cytosol"/>
    <property type="evidence" value="ECO:0007669"/>
    <property type="project" value="TreeGrafter"/>
</dbReference>
<dbReference type="GO" id="GO:0016791">
    <property type="term" value="F:phosphatase activity"/>
    <property type="evidence" value="ECO:0007669"/>
    <property type="project" value="UniProtKB-UniRule"/>
</dbReference>
<dbReference type="GO" id="GO:0008270">
    <property type="term" value="F:zinc ion binding"/>
    <property type="evidence" value="ECO:0007669"/>
    <property type="project" value="UniProtKB-UniRule"/>
</dbReference>
<dbReference type="GO" id="GO:0071978">
    <property type="term" value="P:bacterial-type flagellum-dependent swarming motility"/>
    <property type="evidence" value="ECO:0007669"/>
    <property type="project" value="TreeGrafter"/>
</dbReference>
<dbReference type="CDD" id="cd07437">
    <property type="entry name" value="PHP_HisPPase_Ycdx_like"/>
    <property type="match status" value="1"/>
</dbReference>
<dbReference type="Gene3D" id="3.20.20.140">
    <property type="entry name" value="Metal-dependent hydrolases"/>
    <property type="match status" value="1"/>
</dbReference>
<dbReference type="HAMAP" id="MF_01561">
    <property type="entry name" value="YcdX_phosphat"/>
    <property type="match status" value="1"/>
</dbReference>
<dbReference type="InterPro" id="IPR023710">
    <property type="entry name" value="Phosphatase_YcdX_put"/>
</dbReference>
<dbReference type="InterPro" id="IPR004013">
    <property type="entry name" value="PHP_dom"/>
</dbReference>
<dbReference type="InterPro" id="IPR050243">
    <property type="entry name" value="PHP_phosphatase"/>
</dbReference>
<dbReference type="InterPro" id="IPR003141">
    <property type="entry name" value="Pol/His_phosphatase_N"/>
</dbReference>
<dbReference type="InterPro" id="IPR016195">
    <property type="entry name" value="Pol/histidinol_Pase-like"/>
</dbReference>
<dbReference type="NCBIfam" id="NF006702">
    <property type="entry name" value="PRK09248.1"/>
    <property type="match status" value="1"/>
</dbReference>
<dbReference type="PANTHER" id="PTHR36928">
    <property type="entry name" value="PHOSPHATASE YCDX-RELATED"/>
    <property type="match status" value="1"/>
</dbReference>
<dbReference type="PANTHER" id="PTHR36928:SF1">
    <property type="entry name" value="PHOSPHATASE YCDX-RELATED"/>
    <property type="match status" value="1"/>
</dbReference>
<dbReference type="Pfam" id="PF02811">
    <property type="entry name" value="PHP"/>
    <property type="match status" value="1"/>
</dbReference>
<dbReference type="SMART" id="SM00481">
    <property type="entry name" value="POLIIIAc"/>
    <property type="match status" value="1"/>
</dbReference>
<dbReference type="SUPFAM" id="SSF89550">
    <property type="entry name" value="PHP domain-like"/>
    <property type="match status" value="1"/>
</dbReference>
<comment type="cofactor">
    <cofactor evidence="1">
        <name>Zn(2+)</name>
        <dbReference type="ChEBI" id="CHEBI:29105"/>
    </cofactor>
    <text evidence="1">Binds 3 Zn(2+) ions per subunit.</text>
</comment>
<comment type="similarity">
    <text evidence="1">Belongs to the PHP family.</text>
</comment>
<feature type="chain" id="PRO_0000228711" description="Probable phosphatase VV2_1469">
    <location>
        <begin position="1"/>
        <end position="249"/>
    </location>
</feature>
<feature type="binding site" evidence="1">
    <location>
        <position position="8"/>
    </location>
    <ligand>
        <name>Zn(2+)</name>
        <dbReference type="ChEBI" id="CHEBI:29105"/>
        <label>1</label>
    </ligand>
</feature>
<feature type="binding site" evidence="1">
    <location>
        <position position="10"/>
    </location>
    <ligand>
        <name>Zn(2+)</name>
        <dbReference type="ChEBI" id="CHEBI:29105"/>
        <label>1</label>
    </ligand>
</feature>
<feature type="binding site" evidence="1">
    <location>
        <position position="16"/>
    </location>
    <ligand>
        <name>Zn(2+)</name>
        <dbReference type="ChEBI" id="CHEBI:29105"/>
        <label>2</label>
    </ligand>
</feature>
<feature type="binding site" evidence="1">
    <location>
        <position position="41"/>
    </location>
    <ligand>
        <name>Zn(2+)</name>
        <dbReference type="ChEBI" id="CHEBI:29105"/>
        <label>2</label>
    </ligand>
</feature>
<feature type="binding site" evidence="1">
    <location>
        <position position="74"/>
    </location>
    <ligand>
        <name>Zn(2+)</name>
        <dbReference type="ChEBI" id="CHEBI:29105"/>
        <label>1</label>
    </ligand>
</feature>
<feature type="binding site" evidence="1">
    <location>
        <position position="74"/>
    </location>
    <ligand>
        <name>Zn(2+)</name>
        <dbReference type="ChEBI" id="CHEBI:29105"/>
        <label>3</label>
    </ligand>
</feature>
<feature type="binding site" evidence="1">
    <location>
        <position position="102"/>
    </location>
    <ligand>
        <name>Zn(2+)</name>
        <dbReference type="ChEBI" id="CHEBI:29105"/>
        <label>3</label>
    </ligand>
</feature>
<feature type="binding site" evidence="1">
    <location>
        <position position="132"/>
    </location>
    <ligand>
        <name>Zn(2+)</name>
        <dbReference type="ChEBI" id="CHEBI:29105"/>
        <label>3</label>
    </ligand>
</feature>
<feature type="binding site" evidence="1">
    <location>
        <position position="194"/>
    </location>
    <ligand>
        <name>Zn(2+)</name>
        <dbReference type="ChEBI" id="CHEBI:29105"/>
        <label>1</label>
    </ligand>
</feature>
<feature type="binding site" evidence="1">
    <location>
        <position position="196"/>
    </location>
    <ligand>
        <name>Zn(2+)</name>
        <dbReference type="ChEBI" id="CHEBI:29105"/>
        <label>2</label>
    </ligand>
</feature>
<proteinExistence type="inferred from homology"/>
<organism>
    <name type="scientific">Vibrio vulnificus (strain CMCP6)</name>
    <dbReference type="NCBI Taxonomy" id="216895"/>
    <lineage>
        <taxon>Bacteria</taxon>
        <taxon>Pseudomonadati</taxon>
        <taxon>Pseudomonadota</taxon>
        <taxon>Gammaproteobacteria</taxon>
        <taxon>Vibrionales</taxon>
        <taxon>Vibrionaceae</taxon>
        <taxon>Vibrio</taxon>
    </lineage>
</organism>
<accession>Q8D456</accession>
<reference key="1">
    <citation type="submission" date="2002-12" db="EMBL/GenBank/DDBJ databases">
        <title>Complete genome sequence of Vibrio vulnificus CMCP6.</title>
        <authorList>
            <person name="Rhee J.H."/>
            <person name="Kim S.Y."/>
            <person name="Chung S.S."/>
            <person name="Kim J.J."/>
            <person name="Moon Y.H."/>
            <person name="Jeong H."/>
            <person name="Choy H.E."/>
        </authorList>
    </citation>
    <scope>NUCLEOTIDE SEQUENCE [LARGE SCALE GENOMIC DNA]</scope>
    <source>
        <strain>CMCP6</strain>
    </source>
</reference>
<keyword id="KW-0378">Hydrolase</keyword>
<keyword id="KW-0479">Metal-binding</keyword>
<keyword id="KW-0862">Zinc</keyword>
<name>Y5469_VIBVU</name>
<evidence type="ECO:0000255" key="1">
    <source>
        <dbReference type="HAMAP-Rule" id="MF_01561"/>
    </source>
</evidence>
<protein>
    <recommendedName>
        <fullName evidence="1">Probable phosphatase VV2_1469</fullName>
        <ecNumber evidence="1">3.1.3.-</ecNumber>
    </recommendedName>
</protein>
<gene>
    <name type="ordered locus">VV2_1469</name>
</gene>
<sequence>MELKIDTHSHTYASGHAYSTLIENARSAKENGLAMFCTTDHAESMPGAPHYWFFANQRVLPRFLEGVAILRGVEANILNTEGEIDLPLSVDPNLDWAIASFHEPVFAPSNKEAHTQALLNVIQGGRIDALGHLGNPHFDFDFHAVLHCAKDHNVAIEINNSTLKGHSRVGSVERCYEIARVGKALGVYFTTGSDAHFCQDVGKLDLASELLDSVGIDSHRVITHSPSQFLDFLELRGRGPIDELASLRQ</sequence>